<name>SYR_PSESM</name>
<feature type="chain" id="PRO_0000151594" description="Arginine--tRNA ligase">
    <location>
        <begin position="1"/>
        <end position="578"/>
    </location>
</feature>
<feature type="short sequence motif" description="'HIGH' region">
    <location>
        <begin position="127"/>
        <end position="137"/>
    </location>
</feature>
<sequence>MKDTIRQLIQQALTRLVTEGVLPEGLTPAIQVENARDKTHGDFASNIAMMLAKPAGMKPRDLAEKLIAALPADEQVSKVEIAGPGFLNFFQNTAALASRLDAALSDPQLSVRKAGAAQRVVVDLSAPNLAKEMHVGHLRSTIIGDGVANVLEFLGDTVIRQNHVGDWGTQFGMLLAYLQEKPATSDELSDLENFYRAAKQRFDESEEFAERARGLVVKLQAGDAECLTLWTRFKDISLSHCQQTYERLNVKLTPADVMGESAYNDDLANVVNDLKAAGLLVESNGAQCVFLEEFRTADDTPLPVIVQKAGGGYLYATTDLAAIRYRSKVLKADRALYFVDQRQALHFQQVFEVARRAGFVHEGMQLEHMGFGTMNGADGRPFKTRDGGTVKLIDLLDEAQERAYTLVKEKNPQVAEAELRSIAKAVGISAVKYADLSKHRASDYSFNFDQMLSFEGNTAPYLLYAYTRVAGVFRKLGTPFDASKGHIVLEAPQEQELAARLAQFNETLNNVAEKGTPHVLCAYLYDLAGLFSSFYENCPILGAENPDQQQSRLRLAALTGRTLKQGLDLLGLETLERM</sequence>
<evidence type="ECO:0000255" key="1">
    <source>
        <dbReference type="HAMAP-Rule" id="MF_00123"/>
    </source>
</evidence>
<comment type="catalytic activity">
    <reaction evidence="1">
        <text>tRNA(Arg) + L-arginine + ATP = L-arginyl-tRNA(Arg) + AMP + diphosphate</text>
        <dbReference type="Rhea" id="RHEA:20301"/>
        <dbReference type="Rhea" id="RHEA-COMP:9658"/>
        <dbReference type="Rhea" id="RHEA-COMP:9673"/>
        <dbReference type="ChEBI" id="CHEBI:30616"/>
        <dbReference type="ChEBI" id="CHEBI:32682"/>
        <dbReference type="ChEBI" id="CHEBI:33019"/>
        <dbReference type="ChEBI" id="CHEBI:78442"/>
        <dbReference type="ChEBI" id="CHEBI:78513"/>
        <dbReference type="ChEBI" id="CHEBI:456215"/>
        <dbReference type="EC" id="6.1.1.19"/>
    </reaction>
</comment>
<comment type="subunit">
    <text evidence="1">Monomer.</text>
</comment>
<comment type="subcellular location">
    <subcellularLocation>
        <location evidence="1">Cytoplasm</location>
    </subcellularLocation>
</comment>
<comment type="similarity">
    <text evidence="1">Belongs to the class-I aminoacyl-tRNA synthetase family.</text>
</comment>
<dbReference type="EC" id="6.1.1.19" evidence="1"/>
<dbReference type="EMBL" id="AE016853">
    <property type="protein sequence ID" value="AAO58565.1"/>
    <property type="molecule type" value="Genomic_DNA"/>
</dbReference>
<dbReference type="RefSeq" id="NP_794870.1">
    <property type="nucleotide sequence ID" value="NC_004578.1"/>
</dbReference>
<dbReference type="RefSeq" id="WP_011105333.1">
    <property type="nucleotide sequence ID" value="NC_004578.1"/>
</dbReference>
<dbReference type="SMR" id="Q87V03"/>
<dbReference type="STRING" id="223283.PSPTO_5138"/>
<dbReference type="GeneID" id="1186823"/>
<dbReference type="KEGG" id="pst:PSPTO_5138"/>
<dbReference type="PATRIC" id="fig|223283.9.peg.5258"/>
<dbReference type="eggNOG" id="COG0018">
    <property type="taxonomic scope" value="Bacteria"/>
</dbReference>
<dbReference type="HOGENOM" id="CLU_006406_5_1_6"/>
<dbReference type="OrthoDB" id="9803211at2"/>
<dbReference type="PhylomeDB" id="Q87V03"/>
<dbReference type="Proteomes" id="UP000002515">
    <property type="component" value="Chromosome"/>
</dbReference>
<dbReference type="GO" id="GO:0005737">
    <property type="term" value="C:cytoplasm"/>
    <property type="evidence" value="ECO:0007669"/>
    <property type="project" value="UniProtKB-SubCell"/>
</dbReference>
<dbReference type="GO" id="GO:0004814">
    <property type="term" value="F:arginine-tRNA ligase activity"/>
    <property type="evidence" value="ECO:0007669"/>
    <property type="project" value="UniProtKB-UniRule"/>
</dbReference>
<dbReference type="GO" id="GO:0005524">
    <property type="term" value="F:ATP binding"/>
    <property type="evidence" value="ECO:0007669"/>
    <property type="project" value="UniProtKB-UniRule"/>
</dbReference>
<dbReference type="GO" id="GO:0006420">
    <property type="term" value="P:arginyl-tRNA aminoacylation"/>
    <property type="evidence" value="ECO:0007669"/>
    <property type="project" value="UniProtKB-UniRule"/>
</dbReference>
<dbReference type="CDD" id="cd07956">
    <property type="entry name" value="Anticodon_Ia_Arg"/>
    <property type="match status" value="1"/>
</dbReference>
<dbReference type="CDD" id="cd00671">
    <property type="entry name" value="ArgRS_core"/>
    <property type="match status" value="1"/>
</dbReference>
<dbReference type="FunFam" id="1.10.730.10:FF:000001">
    <property type="entry name" value="Arginine--tRNA ligase"/>
    <property type="match status" value="1"/>
</dbReference>
<dbReference type="FunFam" id="3.30.1360.70:FF:000003">
    <property type="entry name" value="Arginine--tRNA ligase"/>
    <property type="match status" value="1"/>
</dbReference>
<dbReference type="FunFam" id="3.40.50.620:FF:000030">
    <property type="entry name" value="Arginine--tRNA ligase"/>
    <property type="match status" value="1"/>
</dbReference>
<dbReference type="Gene3D" id="3.30.1360.70">
    <property type="entry name" value="Arginyl tRNA synthetase N-terminal domain"/>
    <property type="match status" value="1"/>
</dbReference>
<dbReference type="Gene3D" id="3.40.50.620">
    <property type="entry name" value="HUPs"/>
    <property type="match status" value="1"/>
</dbReference>
<dbReference type="Gene3D" id="1.10.730.10">
    <property type="entry name" value="Isoleucyl-tRNA Synthetase, Domain 1"/>
    <property type="match status" value="1"/>
</dbReference>
<dbReference type="HAMAP" id="MF_00123">
    <property type="entry name" value="Arg_tRNA_synth"/>
    <property type="match status" value="1"/>
</dbReference>
<dbReference type="InterPro" id="IPR001412">
    <property type="entry name" value="aa-tRNA-synth_I_CS"/>
</dbReference>
<dbReference type="InterPro" id="IPR001278">
    <property type="entry name" value="Arg-tRNA-ligase"/>
</dbReference>
<dbReference type="InterPro" id="IPR005148">
    <property type="entry name" value="Arg-tRNA-synth_N"/>
</dbReference>
<dbReference type="InterPro" id="IPR036695">
    <property type="entry name" value="Arg-tRNA-synth_N_sf"/>
</dbReference>
<dbReference type="InterPro" id="IPR035684">
    <property type="entry name" value="ArgRS_core"/>
</dbReference>
<dbReference type="InterPro" id="IPR008909">
    <property type="entry name" value="DALR_anticod-bd"/>
</dbReference>
<dbReference type="InterPro" id="IPR014729">
    <property type="entry name" value="Rossmann-like_a/b/a_fold"/>
</dbReference>
<dbReference type="InterPro" id="IPR009080">
    <property type="entry name" value="tRNAsynth_Ia_anticodon-bd"/>
</dbReference>
<dbReference type="NCBIfam" id="TIGR00456">
    <property type="entry name" value="argS"/>
    <property type="match status" value="1"/>
</dbReference>
<dbReference type="PANTHER" id="PTHR11956:SF5">
    <property type="entry name" value="ARGININE--TRNA LIGASE, CYTOPLASMIC"/>
    <property type="match status" value="1"/>
</dbReference>
<dbReference type="PANTHER" id="PTHR11956">
    <property type="entry name" value="ARGINYL-TRNA SYNTHETASE"/>
    <property type="match status" value="1"/>
</dbReference>
<dbReference type="Pfam" id="PF03485">
    <property type="entry name" value="Arg_tRNA_synt_N"/>
    <property type="match status" value="1"/>
</dbReference>
<dbReference type="Pfam" id="PF05746">
    <property type="entry name" value="DALR_1"/>
    <property type="match status" value="1"/>
</dbReference>
<dbReference type="Pfam" id="PF00750">
    <property type="entry name" value="tRNA-synt_1d"/>
    <property type="match status" value="1"/>
</dbReference>
<dbReference type="PRINTS" id="PR01038">
    <property type="entry name" value="TRNASYNTHARG"/>
</dbReference>
<dbReference type="SMART" id="SM01016">
    <property type="entry name" value="Arg_tRNA_synt_N"/>
    <property type="match status" value="1"/>
</dbReference>
<dbReference type="SMART" id="SM00836">
    <property type="entry name" value="DALR_1"/>
    <property type="match status" value="1"/>
</dbReference>
<dbReference type="SUPFAM" id="SSF47323">
    <property type="entry name" value="Anticodon-binding domain of a subclass of class I aminoacyl-tRNA synthetases"/>
    <property type="match status" value="1"/>
</dbReference>
<dbReference type="SUPFAM" id="SSF55190">
    <property type="entry name" value="Arginyl-tRNA synthetase (ArgRS), N-terminal 'additional' domain"/>
    <property type="match status" value="1"/>
</dbReference>
<dbReference type="SUPFAM" id="SSF52374">
    <property type="entry name" value="Nucleotidylyl transferase"/>
    <property type="match status" value="1"/>
</dbReference>
<dbReference type="PROSITE" id="PS00178">
    <property type="entry name" value="AA_TRNA_LIGASE_I"/>
    <property type="match status" value="1"/>
</dbReference>
<gene>
    <name evidence="1" type="primary">argS</name>
    <name type="ordered locus">PSPTO_5138</name>
</gene>
<protein>
    <recommendedName>
        <fullName evidence="1">Arginine--tRNA ligase</fullName>
        <ecNumber evidence="1">6.1.1.19</ecNumber>
    </recommendedName>
    <alternativeName>
        <fullName evidence="1">Arginyl-tRNA synthetase</fullName>
        <shortName evidence="1">ArgRS</shortName>
    </alternativeName>
</protein>
<proteinExistence type="inferred from homology"/>
<keyword id="KW-0030">Aminoacyl-tRNA synthetase</keyword>
<keyword id="KW-0067">ATP-binding</keyword>
<keyword id="KW-0963">Cytoplasm</keyword>
<keyword id="KW-0436">Ligase</keyword>
<keyword id="KW-0547">Nucleotide-binding</keyword>
<keyword id="KW-0648">Protein biosynthesis</keyword>
<keyword id="KW-1185">Reference proteome</keyword>
<reference key="1">
    <citation type="journal article" date="2003" name="Proc. Natl. Acad. Sci. U.S.A.">
        <title>The complete genome sequence of the Arabidopsis and tomato pathogen Pseudomonas syringae pv. tomato DC3000.</title>
        <authorList>
            <person name="Buell C.R."/>
            <person name="Joardar V."/>
            <person name="Lindeberg M."/>
            <person name="Selengut J."/>
            <person name="Paulsen I.T."/>
            <person name="Gwinn M.L."/>
            <person name="Dodson R.J."/>
            <person name="DeBoy R.T."/>
            <person name="Durkin A.S."/>
            <person name="Kolonay J.F."/>
            <person name="Madupu R."/>
            <person name="Daugherty S.C."/>
            <person name="Brinkac L.M."/>
            <person name="Beanan M.J."/>
            <person name="Haft D.H."/>
            <person name="Nelson W.C."/>
            <person name="Davidsen T.M."/>
            <person name="Zafar N."/>
            <person name="Zhou L."/>
            <person name="Liu J."/>
            <person name="Yuan Q."/>
            <person name="Khouri H.M."/>
            <person name="Fedorova N.B."/>
            <person name="Tran B."/>
            <person name="Russell D."/>
            <person name="Berry K.J."/>
            <person name="Utterback T.R."/>
            <person name="Van Aken S.E."/>
            <person name="Feldblyum T.V."/>
            <person name="D'Ascenzo M."/>
            <person name="Deng W.-L."/>
            <person name="Ramos A.R."/>
            <person name="Alfano J.R."/>
            <person name="Cartinhour S."/>
            <person name="Chatterjee A.K."/>
            <person name="Delaney T.P."/>
            <person name="Lazarowitz S.G."/>
            <person name="Martin G.B."/>
            <person name="Schneider D.J."/>
            <person name="Tang X."/>
            <person name="Bender C.L."/>
            <person name="White O."/>
            <person name="Fraser C.M."/>
            <person name="Collmer A."/>
        </authorList>
    </citation>
    <scope>NUCLEOTIDE SEQUENCE [LARGE SCALE GENOMIC DNA]</scope>
    <source>
        <strain>ATCC BAA-871 / DC3000</strain>
    </source>
</reference>
<organism>
    <name type="scientific">Pseudomonas syringae pv. tomato (strain ATCC BAA-871 / DC3000)</name>
    <dbReference type="NCBI Taxonomy" id="223283"/>
    <lineage>
        <taxon>Bacteria</taxon>
        <taxon>Pseudomonadati</taxon>
        <taxon>Pseudomonadota</taxon>
        <taxon>Gammaproteobacteria</taxon>
        <taxon>Pseudomonadales</taxon>
        <taxon>Pseudomonadaceae</taxon>
        <taxon>Pseudomonas</taxon>
    </lineage>
</organism>
<accession>Q87V03</accession>